<organism>
    <name type="scientific">Caldicellulosiruptor bescii (strain ATCC BAA-1888 / DSM 6725 / KCTC 15123 / Z-1320)</name>
    <name type="common">Anaerocellum thermophilum</name>
    <dbReference type="NCBI Taxonomy" id="521460"/>
    <lineage>
        <taxon>Bacteria</taxon>
        <taxon>Bacillati</taxon>
        <taxon>Bacillota</taxon>
        <taxon>Bacillota incertae sedis</taxon>
        <taxon>Caldicellulosiruptorales</taxon>
        <taxon>Caldicellulosiruptoraceae</taxon>
        <taxon>Caldicellulosiruptor</taxon>
    </lineage>
</organism>
<sequence>MNLEVEIAGIKLKNPVIAASGTFGFGREYSKLIDISEFGAICTKGITLKKRIGNPQPRLCEVYAGIINSVGLENPGVEAFINDELPFLKSFDTKIIANINGFSKEEFVELTKILTSLVDMIEVNLSCPNVKEGGMVFGKDPKKVYEITKSVKDVASCPIIVKLTPNVTDITQLAVAAENAGADAISLINTVSAMAIDIETRKPLIKMVTGGLSGPAIKPIAVRMVYECFKKVRIPIIGMGGIMNYKDAIEFFIAGATAIQIGTVNFINPKAVCEIKEGIEAYLERKGFKSIKELVGSINI</sequence>
<keyword id="KW-0963">Cytoplasm</keyword>
<keyword id="KW-0285">Flavoprotein</keyword>
<keyword id="KW-0288">FMN</keyword>
<keyword id="KW-0520">NAD</keyword>
<keyword id="KW-0560">Oxidoreductase</keyword>
<keyword id="KW-0665">Pyrimidine biosynthesis</keyword>
<gene>
    <name type="primary">pyrD</name>
    <name type="ordered locus">Athe_1380</name>
</gene>
<protein>
    <recommendedName>
        <fullName>Dihydroorotate dehydrogenase B (NAD(+)), catalytic subunit</fullName>
        <shortName>DHOD B</shortName>
        <shortName>DHODase B</shortName>
        <shortName>DHOdehase B</shortName>
        <ecNumber>1.3.1.14</ecNumber>
    </recommendedName>
    <alternativeName>
        <fullName>Dihydroorotate oxidase B</fullName>
    </alternativeName>
    <alternativeName>
        <fullName>Orotate reductase (NADH)</fullName>
    </alternativeName>
</protein>
<proteinExistence type="inferred from homology"/>
<dbReference type="EC" id="1.3.1.14"/>
<dbReference type="EMBL" id="CP001393">
    <property type="protein sequence ID" value="ACM60480.1"/>
    <property type="molecule type" value="Genomic_DNA"/>
</dbReference>
<dbReference type="RefSeq" id="WP_015907849.1">
    <property type="nucleotide sequence ID" value="NC_012034.1"/>
</dbReference>
<dbReference type="SMR" id="B9MS26"/>
<dbReference type="STRING" id="521460.Athe_1380"/>
<dbReference type="GeneID" id="31772727"/>
<dbReference type="KEGG" id="ate:Athe_1380"/>
<dbReference type="eggNOG" id="COG0167">
    <property type="taxonomic scope" value="Bacteria"/>
</dbReference>
<dbReference type="HOGENOM" id="CLU_042042_0_0_9"/>
<dbReference type="UniPathway" id="UPA00070">
    <property type="reaction ID" value="UER00945"/>
</dbReference>
<dbReference type="Proteomes" id="UP000007723">
    <property type="component" value="Chromosome"/>
</dbReference>
<dbReference type="GO" id="GO:0005737">
    <property type="term" value="C:cytoplasm"/>
    <property type="evidence" value="ECO:0007669"/>
    <property type="project" value="UniProtKB-SubCell"/>
</dbReference>
<dbReference type="GO" id="GO:0004589">
    <property type="term" value="F:dihydroorotate dehydrogenase (NAD+) activity"/>
    <property type="evidence" value="ECO:0007669"/>
    <property type="project" value="UniProtKB-EC"/>
</dbReference>
<dbReference type="GO" id="GO:0006207">
    <property type="term" value="P:'de novo' pyrimidine nucleobase biosynthetic process"/>
    <property type="evidence" value="ECO:0007669"/>
    <property type="project" value="InterPro"/>
</dbReference>
<dbReference type="GO" id="GO:0044205">
    <property type="term" value="P:'de novo' UMP biosynthetic process"/>
    <property type="evidence" value="ECO:0007669"/>
    <property type="project" value="UniProtKB-UniRule"/>
</dbReference>
<dbReference type="CDD" id="cd04740">
    <property type="entry name" value="DHOD_1B_like"/>
    <property type="match status" value="1"/>
</dbReference>
<dbReference type="FunFam" id="3.20.20.70:FF:000027">
    <property type="entry name" value="Dihydropyrimidine dehydrogenase [NADP(+)]"/>
    <property type="match status" value="1"/>
</dbReference>
<dbReference type="Gene3D" id="3.20.20.70">
    <property type="entry name" value="Aldolase class I"/>
    <property type="match status" value="1"/>
</dbReference>
<dbReference type="HAMAP" id="MF_00224">
    <property type="entry name" value="DHO_dh_type1"/>
    <property type="match status" value="1"/>
</dbReference>
<dbReference type="InterPro" id="IPR013785">
    <property type="entry name" value="Aldolase_TIM"/>
</dbReference>
<dbReference type="InterPro" id="IPR050074">
    <property type="entry name" value="DHO_dehydrogenase"/>
</dbReference>
<dbReference type="InterPro" id="IPR033888">
    <property type="entry name" value="DHOD_1B"/>
</dbReference>
<dbReference type="InterPro" id="IPR024920">
    <property type="entry name" value="Dihydroorotate_DH_1"/>
</dbReference>
<dbReference type="InterPro" id="IPR012135">
    <property type="entry name" value="Dihydroorotate_DH_1_2"/>
</dbReference>
<dbReference type="InterPro" id="IPR005720">
    <property type="entry name" value="Dihydroorotate_DH_cat"/>
</dbReference>
<dbReference type="InterPro" id="IPR001295">
    <property type="entry name" value="Dihydroorotate_DH_CS"/>
</dbReference>
<dbReference type="InterPro" id="IPR049622">
    <property type="entry name" value="Dihydroorotate_DH_I"/>
</dbReference>
<dbReference type="NCBIfam" id="NF005574">
    <property type="entry name" value="PRK07259.1"/>
    <property type="match status" value="1"/>
</dbReference>
<dbReference type="NCBIfam" id="TIGR01037">
    <property type="entry name" value="pyrD_sub1_fam"/>
    <property type="match status" value="1"/>
</dbReference>
<dbReference type="PANTHER" id="PTHR48109:SF1">
    <property type="entry name" value="DIHYDROOROTATE DEHYDROGENASE (FUMARATE)"/>
    <property type="match status" value="1"/>
</dbReference>
<dbReference type="PANTHER" id="PTHR48109">
    <property type="entry name" value="DIHYDROOROTATE DEHYDROGENASE (QUINONE), MITOCHONDRIAL-RELATED"/>
    <property type="match status" value="1"/>
</dbReference>
<dbReference type="Pfam" id="PF01180">
    <property type="entry name" value="DHO_dh"/>
    <property type="match status" value="1"/>
</dbReference>
<dbReference type="PIRSF" id="PIRSF000164">
    <property type="entry name" value="DHO_oxidase"/>
    <property type="match status" value="1"/>
</dbReference>
<dbReference type="SUPFAM" id="SSF51395">
    <property type="entry name" value="FMN-linked oxidoreductases"/>
    <property type="match status" value="1"/>
</dbReference>
<dbReference type="PROSITE" id="PS00911">
    <property type="entry name" value="DHODEHASE_1"/>
    <property type="match status" value="1"/>
</dbReference>
<dbReference type="PROSITE" id="PS00912">
    <property type="entry name" value="DHODEHASE_2"/>
    <property type="match status" value="1"/>
</dbReference>
<comment type="function">
    <text evidence="1">Catalyzes the conversion of dihydroorotate to orotate with NAD(+) as electron acceptor.</text>
</comment>
<comment type="catalytic activity">
    <reaction>
        <text>(S)-dihydroorotate + NAD(+) = orotate + NADH + H(+)</text>
        <dbReference type="Rhea" id="RHEA:13513"/>
        <dbReference type="ChEBI" id="CHEBI:15378"/>
        <dbReference type="ChEBI" id="CHEBI:30839"/>
        <dbReference type="ChEBI" id="CHEBI:30864"/>
        <dbReference type="ChEBI" id="CHEBI:57540"/>
        <dbReference type="ChEBI" id="CHEBI:57945"/>
        <dbReference type="EC" id="1.3.1.14"/>
    </reaction>
</comment>
<comment type="cofactor">
    <cofactor evidence="1">
        <name>FMN</name>
        <dbReference type="ChEBI" id="CHEBI:58210"/>
    </cofactor>
    <text evidence="1">Binds 1 FMN per subunit.</text>
</comment>
<comment type="pathway">
    <text>Pyrimidine metabolism; UMP biosynthesis via de novo pathway; orotate from (S)-dihydroorotate (NAD(+) route): step 1/1.</text>
</comment>
<comment type="subunit">
    <text evidence="1">Heterotetramer of 2 PyrK and 2 PyrD type B subunits.</text>
</comment>
<comment type="subcellular location">
    <subcellularLocation>
        <location evidence="1">Cytoplasm</location>
    </subcellularLocation>
</comment>
<comment type="similarity">
    <text evidence="2">Belongs to the dihydroorotate dehydrogenase family. Type 1 subfamily.</text>
</comment>
<feature type="chain" id="PRO_1000195037" description="Dihydroorotate dehydrogenase B (NAD(+)), catalytic subunit">
    <location>
        <begin position="1"/>
        <end position="300"/>
    </location>
</feature>
<feature type="active site" description="Nucleophile">
    <location>
        <position position="127"/>
    </location>
</feature>
<feature type="binding site" evidence="1">
    <location>
        <position position="20"/>
    </location>
    <ligand>
        <name>FMN</name>
        <dbReference type="ChEBI" id="CHEBI:58210"/>
    </ligand>
</feature>
<feature type="binding site" evidence="1">
    <location>
        <begin position="44"/>
        <end position="45"/>
    </location>
    <ligand>
        <name>FMN</name>
        <dbReference type="ChEBI" id="CHEBI:58210"/>
    </ligand>
</feature>
<feature type="binding site" evidence="1">
    <location>
        <position position="44"/>
    </location>
    <ligand>
        <name>substrate</name>
    </ligand>
</feature>
<feature type="binding site" evidence="1">
    <location>
        <begin position="68"/>
        <end position="72"/>
    </location>
    <ligand>
        <name>substrate</name>
    </ligand>
</feature>
<feature type="binding site" evidence="1">
    <location>
        <position position="98"/>
    </location>
    <ligand>
        <name>FMN</name>
        <dbReference type="ChEBI" id="CHEBI:58210"/>
    </ligand>
</feature>
<feature type="binding site" evidence="1">
    <location>
        <position position="124"/>
    </location>
    <ligand>
        <name>FMN</name>
        <dbReference type="ChEBI" id="CHEBI:58210"/>
    </ligand>
</feature>
<feature type="binding site" evidence="1">
    <location>
        <position position="124"/>
    </location>
    <ligand>
        <name>substrate</name>
    </ligand>
</feature>
<feature type="binding site" evidence="1">
    <location>
        <position position="162"/>
    </location>
    <ligand>
        <name>FMN</name>
        <dbReference type="ChEBI" id="CHEBI:58210"/>
    </ligand>
</feature>
<feature type="binding site" evidence="1">
    <location>
        <position position="188"/>
    </location>
    <ligand>
        <name>FMN</name>
        <dbReference type="ChEBI" id="CHEBI:58210"/>
    </ligand>
</feature>
<feature type="binding site" evidence="1">
    <location>
        <begin position="189"/>
        <end position="190"/>
    </location>
    <ligand>
        <name>substrate</name>
    </ligand>
</feature>
<feature type="binding site" evidence="1">
    <location>
        <position position="214"/>
    </location>
    <ligand>
        <name>FMN</name>
        <dbReference type="ChEBI" id="CHEBI:58210"/>
    </ligand>
</feature>
<feature type="binding site" evidence="1">
    <location>
        <begin position="240"/>
        <end position="241"/>
    </location>
    <ligand>
        <name>FMN</name>
        <dbReference type="ChEBI" id="CHEBI:58210"/>
    </ligand>
</feature>
<feature type="binding site" evidence="1">
    <location>
        <begin position="262"/>
        <end position="263"/>
    </location>
    <ligand>
        <name>FMN</name>
        <dbReference type="ChEBI" id="CHEBI:58210"/>
    </ligand>
</feature>
<name>PYRDB_CALBD</name>
<reference key="1">
    <citation type="submission" date="2009-01" db="EMBL/GenBank/DDBJ databases">
        <title>Complete sequence of chromosome of Caldicellulosiruptor becscii DSM 6725.</title>
        <authorList>
            <person name="Lucas S."/>
            <person name="Copeland A."/>
            <person name="Lapidus A."/>
            <person name="Glavina del Rio T."/>
            <person name="Tice H."/>
            <person name="Bruce D."/>
            <person name="Goodwin L."/>
            <person name="Pitluck S."/>
            <person name="Sims D."/>
            <person name="Meincke L."/>
            <person name="Brettin T."/>
            <person name="Detter J.C."/>
            <person name="Han C."/>
            <person name="Larimer F."/>
            <person name="Land M."/>
            <person name="Hauser L."/>
            <person name="Kyrpides N."/>
            <person name="Ovchinnikova G."/>
            <person name="Kataeva I."/>
            <person name="Adams M.W.W."/>
        </authorList>
    </citation>
    <scope>NUCLEOTIDE SEQUENCE [LARGE SCALE GENOMIC DNA]</scope>
    <source>
        <strain>ATCC BAA-1888 / DSM 6725 / KCTC 15123 / Z-1320</strain>
    </source>
</reference>
<accession>B9MS26</accession>
<evidence type="ECO:0000250" key="1"/>
<evidence type="ECO:0000305" key="2"/>